<keyword id="KW-0067">ATP-binding</keyword>
<keyword id="KW-0315">Glutamine amidotransferase</keyword>
<keyword id="KW-0436">Ligase</keyword>
<keyword id="KW-0460">Magnesium</keyword>
<keyword id="KW-0479">Metal-binding</keyword>
<keyword id="KW-0547">Nucleotide-binding</keyword>
<keyword id="KW-0665">Pyrimidine biosynthesis</keyword>
<protein>
    <recommendedName>
        <fullName evidence="1">CTP synthase</fullName>
        <ecNumber evidence="1">6.3.4.2</ecNumber>
    </recommendedName>
    <alternativeName>
        <fullName evidence="1">Cytidine 5'-triphosphate synthase</fullName>
    </alternativeName>
    <alternativeName>
        <fullName evidence="1">Cytidine triphosphate synthetase</fullName>
        <shortName evidence="1">CTP synthetase</shortName>
        <shortName evidence="1">CTPS</shortName>
    </alternativeName>
    <alternativeName>
        <fullName evidence="1">UTP--ammonia ligase</fullName>
    </alternativeName>
</protein>
<reference key="1">
    <citation type="journal article" date="2000" name="Nature">
        <title>The genome sequence of the plant pathogen Xylella fastidiosa.</title>
        <authorList>
            <person name="Simpson A.J.G."/>
            <person name="Reinach F.C."/>
            <person name="Arruda P."/>
            <person name="Abreu F.A."/>
            <person name="Acencio M."/>
            <person name="Alvarenga R."/>
            <person name="Alves L.M.C."/>
            <person name="Araya J.E."/>
            <person name="Baia G.S."/>
            <person name="Baptista C.S."/>
            <person name="Barros M.H."/>
            <person name="Bonaccorsi E.D."/>
            <person name="Bordin S."/>
            <person name="Bove J.M."/>
            <person name="Briones M.R.S."/>
            <person name="Bueno M.R.P."/>
            <person name="Camargo A.A."/>
            <person name="Camargo L.E.A."/>
            <person name="Carraro D.M."/>
            <person name="Carrer H."/>
            <person name="Colauto N.B."/>
            <person name="Colombo C."/>
            <person name="Costa F.F."/>
            <person name="Costa M.C.R."/>
            <person name="Costa-Neto C.M."/>
            <person name="Coutinho L.L."/>
            <person name="Cristofani M."/>
            <person name="Dias-Neto E."/>
            <person name="Docena C."/>
            <person name="El-Dorry H."/>
            <person name="Facincani A.P."/>
            <person name="Ferreira A.J.S."/>
            <person name="Ferreira V.C.A."/>
            <person name="Ferro J.A."/>
            <person name="Fraga J.S."/>
            <person name="Franca S.C."/>
            <person name="Franco M.C."/>
            <person name="Frohme M."/>
            <person name="Furlan L.R."/>
            <person name="Garnier M."/>
            <person name="Goldman G.H."/>
            <person name="Goldman M.H.S."/>
            <person name="Gomes S.L."/>
            <person name="Gruber A."/>
            <person name="Ho P.L."/>
            <person name="Hoheisel J.D."/>
            <person name="Junqueira M.L."/>
            <person name="Kemper E.L."/>
            <person name="Kitajima J.P."/>
            <person name="Krieger J.E."/>
            <person name="Kuramae E.E."/>
            <person name="Laigret F."/>
            <person name="Lambais M.R."/>
            <person name="Leite L.C.C."/>
            <person name="Lemos E.G.M."/>
            <person name="Lemos M.V.F."/>
            <person name="Lopes S.A."/>
            <person name="Lopes C.R."/>
            <person name="Machado J.A."/>
            <person name="Machado M.A."/>
            <person name="Madeira A.M.B.N."/>
            <person name="Madeira H.M.F."/>
            <person name="Marino C.L."/>
            <person name="Marques M.V."/>
            <person name="Martins E.A.L."/>
            <person name="Martins E.M.F."/>
            <person name="Matsukuma A.Y."/>
            <person name="Menck C.F.M."/>
            <person name="Miracca E.C."/>
            <person name="Miyaki C.Y."/>
            <person name="Monteiro-Vitorello C.B."/>
            <person name="Moon D.H."/>
            <person name="Nagai M.A."/>
            <person name="Nascimento A.L.T.O."/>
            <person name="Netto L.E.S."/>
            <person name="Nhani A. Jr."/>
            <person name="Nobrega F.G."/>
            <person name="Nunes L.R."/>
            <person name="Oliveira M.A."/>
            <person name="de Oliveira M.C."/>
            <person name="de Oliveira R.C."/>
            <person name="Palmieri D.A."/>
            <person name="Paris A."/>
            <person name="Peixoto B.R."/>
            <person name="Pereira G.A.G."/>
            <person name="Pereira H.A. Jr."/>
            <person name="Pesquero J.B."/>
            <person name="Quaggio R.B."/>
            <person name="Roberto P.G."/>
            <person name="Rodrigues V."/>
            <person name="de Rosa A.J.M."/>
            <person name="de Rosa V.E. Jr."/>
            <person name="de Sa R.G."/>
            <person name="Santelli R.V."/>
            <person name="Sawasaki H.E."/>
            <person name="da Silva A.C.R."/>
            <person name="da Silva A.M."/>
            <person name="da Silva F.R."/>
            <person name="Silva W.A. Jr."/>
            <person name="da Silveira J.F."/>
            <person name="Silvestri M.L.Z."/>
            <person name="Siqueira W.J."/>
            <person name="de Souza A.A."/>
            <person name="de Souza A.P."/>
            <person name="Terenzi M.F."/>
            <person name="Truffi D."/>
            <person name="Tsai S.M."/>
            <person name="Tsuhako M.H."/>
            <person name="Vallada H."/>
            <person name="Van Sluys M.A."/>
            <person name="Verjovski-Almeida S."/>
            <person name="Vettore A.L."/>
            <person name="Zago M.A."/>
            <person name="Zatz M."/>
            <person name="Meidanis J."/>
            <person name="Setubal J.C."/>
        </authorList>
    </citation>
    <scope>NUCLEOTIDE SEQUENCE [LARGE SCALE GENOMIC DNA]</scope>
    <source>
        <strain>9a5c</strain>
    </source>
</reference>
<accession>Q9PDU1</accession>
<dbReference type="EC" id="6.3.4.2" evidence="1"/>
<dbReference type="EMBL" id="AE003849">
    <property type="protein sequence ID" value="AAF84097.1"/>
    <property type="molecule type" value="Genomic_DNA"/>
</dbReference>
<dbReference type="PIR" id="C82700">
    <property type="entry name" value="C82700"/>
</dbReference>
<dbReference type="RefSeq" id="WP_010893794.1">
    <property type="nucleotide sequence ID" value="NC_002488.3"/>
</dbReference>
<dbReference type="SMR" id="Q9PDU1"/>
<dbReference type="STRING" id="160492.XF_1288"/>
<dbReference type="MEROPS" id="C26.964"/>
<dbReference type="KEGG" id="xfa:XF_1288"/>
<dbReference type="eggNOG" id="COG0504">
    <property type="taxonomic scope" value="Bacteria"/>
</dbReference>
<dbReference type="HOGENOM" id="CLU_011675_5_0_6"/>
<dbReference type="UniPathway" id="UPA00159">
    <property type="reaction ID" value="UER00277"/>
</dbReference>
<dbReference type="Proteomes" id="UP000000812">
    <property type="component" value="Chromosome"/>
</dbReference>
<dbReference type="GO" id="GO:0005829">
    <property type="term" value="C:cytosol"/>
    <property type="evidence" value="ECO:0007669"/>
    <property type="project" value="TreeGrafter"/>
</dbReference>
<dbReference type="GO" id="GO:0005524">
    <property type="term" value="F:ATP binding"/>
    <property type="evidence" value="ECO:0007669"/>
    <property type="project" value="UniProtKB-KW"/>
</dbReference>
<dbReference type="GO" id="GO:0003883">
    <property type="term" value="F:CTP synthase activity"/>
    <property type="evidence" value="ECO:0007669"/>
    <property type="project" value="UniProtKB-UniRule"/>
</dbReference>
<dbReference type="GO" id="GO:0004359">
    <property type="term" value="F:glutaminase activity"/>
    <property type="evidence" value="ECO:0007669"/>
    <property type="project" value="RHEA"/>
</dbReference>
<dbReference type="GO" id="GO:0042802">
    <property type="term" value="F:identical protein binding"/>
    <property type="evidence" value="ECO:0007669"/>
    <property type="project" value="TreeGrafter"/>
</dbReference>
<dbReference type="GO" id="GO:0046872">
    <property type="term" value="F:metal ion binding"/>
    <property type="evidence" value="ECO:0007669"/>
    <property type="project" value="UniProtKB-KW"/>
</dbReference>
<dbReference type="GO" id="GO:0044210">
    <property type="term" value="P:'de novo' CTP biosynthetic process"/>
    <property type="evidence" value="ECO:0007669"/>
    <property type="project" value="UniProtKB-UniRule"/>
</dbReference>
<dbReference type="GO" id="GO:0019856">
    <property type="term" value="P:pyrimidine nucleobase biosynthetic process"/>
    <property type="evidence" value="ECO:0007669"/>
    <property type="project" value="TreeGrafter"/>
</dbReference>
<dbReference type="CDD" id="cd03113">
    <property type="entry name" value="CTPS_N"/>
    <property type="match status" value="1"/>
</dbReference>
<dbReference type="CDD" id="cd01746">
    <property type="entry name" value="GATase1_CTP_Synthase"/>
    <property type="match status" value="1"/>
</dbReference>
<dbReference type="FunFam" id="3.40.50.300:FF:000009">
    <property type="entry name" value="CTP synthase"/>
    <property type="match status" value="1"/>
</dbReference>
<dbReference type="FunFam" id="3.40.50.880:FF:000002">
    <property type="entry name" value="CTP synthase"/>
    <property type="match status" value="1"/>
</dbReference>
<dbReference type="Gene3D" id="3.40.50.880">
    <property type="match status" value="1"/>
</dbReference>
<dbReference type="Gene3D" id="3.40.50.300">
    <property type="entry name" value="P-loop containing nucleotide triphosphate hydrolases"/>
    <property type="match status" value="1"/>
</dbReference>
<dbReference type="HAMAP" id="MF_01227">
    <property type="entry name" value="PyrG"/>
    <property type="match status" value="1"/>
</dbReference>
<dbReference type="InterPro" id="IPR029062">
    <property type="entry name" value="Class_I_gatase-like"/>
</dbReference>
<dbReference type="InterPro" id="IPR004468">
    <property type="entry name" value="CTP_synthase"/>
</dbReference>
<dbReference type="InterPro" id="IPR017456">
    <property type="entry name" value="CTP_synthase_N"/>
</dbReference>
<dbReference type="InterPro" id="IPR017926">
    <property type="entry name" value="GATASE"/>
</dbReference>
<dbReference type="InterPro" id="IPR033828">
    <property type="entry name" value="GATase1_CTP_Synthase"/>
</dbReference>
<dbReference type="InterPro" id="IPR027417">
    <property type="entry name" value="P-loop_NTPase"/>
</dbReference>
<dbReference type="NCBIfam" id="NF003792">
    <property type="entry name" value="PRK05380.1"/>
    <property type="match status" value="1"/>
</dbReference>
<dbReference type="NCBIfam" id="TIGR00337">
    <property type="entry name" value="PyrG"/>
    <property type="match status" value="1"/>
</dbReference>
<dbReference type="PANTHER" id="PTHR11550">
    <property type="entry name" value="CTP SYNTHASE"/>
    <property type="match status" value="1"/>
</dbReference>
<dbReference type="PANTHER" id="PTHR11550:SF0">
    <property type="entry name" value="CTP SYNTHASE-RELATED"/>
    <property type="match status" value="1"/>
</dbReference>
<dbReference type="Pfam" id="PF06418">
    <property type="entry name" value="CTP_synth_N"/>
    <property type="match status" value="1"/>
</dbReference>
<dbReference type="Pfam" id="PF00117">
    <property type="entry name" value="GATase"/>
    <property type="match status" value="1"/>
</dbReference>
<dbReference type="SUPFAM" id="SSF52317">
    <property type="entry name" value="Class I glutamine amidotransferase-like"/>
    <property type="match status" value="1"/>
</dbReference>
<dbReference type="SUPFAM" id="SSF52540">
    <property type="entry name" value="P-loop containing nucleoside triphosphate hydrolases"/>
    <property type="match status" value="1"/>
</dbReference>
<dbReference type="PROSITE" id="PS51273">
    <property type="entry name" value="GATASE_TYPE_1"/>
    <property type="match status" value="1"/>
</dbReference>
<evidence type="ECO:0000255" key="1">
    <source>
        <dbReference type="HAMAP-Rule" id="MF_01227"/>
    </source>
</evidence>
<sequence>MTPLIFVTGGVVSSLGKGIAAASLASILEARGLKVTMVKLDPYINVDPGTMSPFQHGEVYVTDDGAETDLDLGHYERFVRTRLSRNNSVTTGRIYQNVICKERRGDYLGATVQVIPHITDEIRRCIDEATASFDVALVEIGGTVGDIESLPFLEAIRQVRIERGAERTMFMHLTLVPYIAAAGELKTKPTQHSVKELRSIGIQPDVLLCRSEQVIPDSERRKIALFTNVSERAVIGCPDIDVLYGMPLELRRQGLDEIVIDQFKLSGTASLADLSEWEDVVDAIKHPLDEVTIAVVGKYVDYQDAYKSVGEALKHGGLRQRTKVNLKWVEAQDLEGSDMGALKDIDGILVPGGFGDRGFEGKVLASRYAREQRVPYFGICYGMQAAVVDYARHVAGLEGANSTENDRQSPHPVIALITEWRTTTGEVERRDEKSDLGGTMRLGLQEQRLKAGTLVRELYGRDVVGERHRHRYEFNNRYRTQLEDAGLVIAAKSMDDTLVEMIELPREMHPWFLACQAHPEFLSTPRDGHPLFIGFVKAARARKAGGKLLREVCV</sequence>
<gene>
    <name evidence="1" type="primary">pyrG</name>
    <name type="ordered locus">XF_1288</name>
</gene>
<proteinExistence type="inferred from homology"/>
<name>PYRG_XYLFA</name>
<feature type="chain" id="PRO_0000138253" description="CTP synthase">
    <location>
        <begin position="1"/>
        <end position="554"/>
    </location>
</feature>
<feature type="domain" description="Glutamine amidotransferase type-1" evidence="1">
    <location>
        <begin position="292"/>
        <end position="545"/>
    </location>
</feature>
<feature type="region of interest" description="Amidoligase domain" evidence="1">
    <location>
        <begin position="1"/>
        <end position="265"/>
    </location>
</feature>
<feature type="active site" description="Nucleophile; for glutamine hydrolysis" evidence="1">
    <location>
        <position position="380"/>
    </location>
</feature>
<feature type="active site" evidence="1">
    <location>
        <position position="518"/>
    </location>
</feature>
<feature type="active site" evidence="1">
    <location>
        <position position="520"/>
    </location>
</feature>
<feature type="binding site" evidence="1">
    <location>
        <position position="13"/>
    </location>
    <ligand>
        <name>CTP</name>
        <dbReference type="ChEBI" id="CHEBI:37563"/>
        <note>allosteric inhibitor</note>
    </ligand>
</feature>
<feature type="binding site" evidence="1">
    <location>
        <position position="13"/>
    </location>
    <ligand>
        <name>UTP</name>
        <dbReference type="ChEBI" id="CHEBI:46398"/>
    </ligand>
</feature>
<feature type="binding site" evidence="1">
    <location>
        <begin position="14"/>
        <end position="19"/>
    </location>
    <ligand>
        <name>ATP</name>
        <dbReference type="ChEBI" id="CHEBI:30616"/>
    </ligand>
</feature>
<feature type="binding site" evidence="1">
    <location>
        <position position="71"/>
    </location>
    <ligand>
        <name>ATP</name>
        <dbReference type="ChEBI" id="CHEBI:30616"/>
    </ligand>
</feature>
<feature type="binding site" evidence="1">
    <location>
        <position position="71"/>
    </location>
    <ligand>
        <name>Mg(2+)</name>
        <dbReference type="ChEBI" id="CHEBI:18420"/>
    </ligand>
</feature>
<feature type="binding site" evidence="1">
    <location>
        <position position="139"/>
    </location>
    <ligand>
        <name>Mg(2+)</name>
        <dbReference type="ChEBI" id="CHEBI:18420"/>
    </ligand>
</feature>
<feature type="binding site" evidence="1">
    <location>
        <begin position="146"/>
        <end position="148"/>
    </location>
    <ligand>
        <name>CTP</name>
        <dbReference type="ChEBI" id="CHEBI:37563"/>
        <note>allosteric inhibitor</note>
    </ligand>
</feature>
<feature type="binding site" evidence="1">
    <location>
        <begin position="186"/>
        <end position="191"/>
    </location>
    <ligand>
        <name>CTP</name>
        <dbReference type="ChEBI" id="CHEBI:37563"/>
        <note>allosteric inhibitor</note>
    </ligand>
</feature>
<feature type="binding site" evidence="1">
    <location>
        <begin position="186"/>
        <end position="191"/>
    </location>
    <ligand>
        <name>UTP</name>
        <dbReference type="ChEBI" id="CHEBI:46398"/>
    </ligand>
</feature>
<feature type="binding site" evidence="1">
    <location>
        <position position="222"/>
    </location>
    <ligand>
        <name>CTP</name>
        <dbReference type="ChEBI" id="CHEBI:37563"/>
        <note>allosteric inhibitor</note>
    </ligand>
</feature>
<feature type="binding site" evidence="1">
    <location>
        <position position="222"/>
    </location>
    <ligand>
        <name>UTP</name>
        <dbReference type="ChEBI" id="CHEBI:46398"/>
    </ligand>
</feature>
<feature type="binding site" evidence="1">
    <location>
        <position position="353"/>
    </location>
    <ligand>
        <name>L-glutamine</name>
        <dbReference type="ChEBI" id="CHEBI:58359"/>
    </ligand>
</feature>
<feature type="binding site" evidence="1">
    <location>
        <begin position="381"/>
        <end position="384"/>
    </location>
    <ligand>
        <name>L-glutamine</name>
        <dbReference type="ChEBI" id="CHEBI:58359"/>
    </ligand>
</feature>
<feature type="binding site" evidence="1">
    <location>
        <position position="404"/>
    </location>
    <ligand>
        <name>L-glutamine</name>
        <dbReference type="ChEBI" id="CHEBI:58359"/>
    </ligand>
</feature>
<feature type="binding site" evidence="1">
    <location>
        <position position="471"/>
    </location>
    <ligand>
        <name>L-glutamine</name>
        <dbReference type="ChEBI" id="CHEBI:58359"/>
    </ligand>
</feature>
<comment type="function">
    <text evidence="1">Catalyzes the ATP-dependent amination of UTP to CTP with either L-glutamine or ammonia as the source of nitrogen. Regulates intracellular CTP levels through interactions with the four ribonucleotide triphosphates.</text>
</comment>
<comment type="catalytic activity">
    <reaction evidence="1">
        <text>UTP + L-glutamine + ATP + H2O = CTP + L-glutamate + ADP + phosphate + 2 H(+)</text>
        <dbReference type="Rhea" id="RHEA:26426"/>
        <dbReference type="ChEBI" id="CHEBI:15377"/>
        <dbReference type="ChEBI" id="CHEBI:15378"/>
        <dbReference type="ChEBI" id="CHEBI:29985"/>
        <dbReference type="ChEBI" id="CHEBI:30616"/>
        <dbReference type="ChEBI" id="CHEBI:37563"/>
        <dbReference type="ChEBI" id="CHEBI:43474"/>
        <dbReference type="ChEBI" id="CHEBI:46398"/>
        <dbReference type="ChEBI" id="CHEBI:58359"/>
        <dbReference type="ChEBI" id="CHEBI:456216"/>
        <dbReference type="EC" id="6.3.4.2"/>
    </reaction>
</comment>
<comment type="catalytic activity">
    <reaction evidence="1">
        <text>L-glutamine + H2O = L-glutamate + NH4(+)</text>
        <dbReference type="Rhea" id="RHEA:15889"/>
        <dbReference type="ChEBI" id="CHEBI:15377"/>
        <dbReference type="ChEBI" id="CHEBI:28938"/>
        <dbReference type="ChEBI" id="CHEBI:29985"/>
        <dbReference type="ChEBI" id="CHEBI:58359"/>
    </reaction>
</comment>
<comment type="catalytic activity">
    <reaction evidence="1">
        <text>UTP + NH4(+) + ATP = CTP + ADP + phosphate + 2 H(+)</text>
        <dbReference type="Rhea" id="RHEA:16597"/>
        <dbReference type="ChEBI" id="CHEBI:15378"/>
        <dbReference type="ChEBI" id="CHEBI:28938"/>
        <dbReference type="ChEBI" id="CHEBI:30616"/>
        <dbReference type="ChEBI" id="CHEBI:37563"/>
        <dbReference type="ChEBI" id="CHEBI:43474"/>
        <dbReference type="ChEBI" id="CHEBI:46398"/>
        <dbReference type="ChEBI" id="CHEBI:456216"/>
    </reaction>
</comment>
<comment type="activity regulation">
    <text evidence="1">Allosterically activated by GTP, when glutamine is the substrate; GTP has no effect on the reaction when ammonia is the substrate. The allosteric effector GTP functions by stabilizing the protein conformation that binds the tetrahedral intermediate(s) formed during glutamine hydrolysis. Inhibited by the product CTP, via allosteric rather than competitive inhibition.</text>
</comment>
<comment type="pathway">
    <text evidence="1">Pyrimidine metabolism; CTP biosynthesis via de novo pathway; CTP from UDP: step 2/2.</text>
</comment>
<comment type="subunit">
    <text evidence="1">Homotetramer.</text>
</comment>
<comment type="miscellaneous">
    <text evidence="1">CTPSs have evolved a hybrid strategy for distinguishing between UTP and CTP. The overlapping regions of the product feedback inhibitory and substrate sites recognize a common feature in both compounds, the triphosphate moiety. To differentiate isosteric substrate and product pyrimidine rings, an additional pocket far from the expected kinase/ligase catalytic site, specifically recognizes the cytosine and ribose portions of the product inhibitor.</text>
</comment>
<comment type="similarity">
    <text evidence="1">Belongs to the CTP synthase family.</text>
</comment>
<organism>
    <name type="scientific">Xylella fastidiosa (strain 9a5c)</name>
    <dbReference type="NCBI Taxonomy" id="160492"/>
    <lineage>
        <taxon>Bacteria</taxon>
        <taxon>Pseudomonadati</taxon>
        <taxon>Pseudomonadota</taxon>
        <taxon>Gammaproteobacteria</taxon>
        <taxon>Lysobacterales</taxon>
        <taxon>Lysobacteraceae</taxon>
        <taxon>Xylella</taxon>
    </lineage>
</organism>